<keyword id="KW-0067">ATP-binding</keyword>
<keyword id="KW-0119">Carbohydrate metabolism</keyword>
<keyword id="KW-0418">Kinase</keyword>
<keyword id="KW-0511">Multifunctional enzyme</keyword>
<keyword id="KW-0547">Nucleotide-binding</keyword>
<keyword id="KW-0548">Nucleotidyltransferase</keyword>
<keyword id="KW-1185">Reference proteome</keyword>
<keyword id="KW-0808">Transferase</keyword>
<dbReference type="EC" id="2.7.1.167" evidence="1"/>
<dbReference type="EC" id="2.7.7.70" evidence="1"/>
<dbReference type="EMBL" id="CP000148">
    <property type="protein sequence ID" value="ABB31164.1"/>
    <property type="molecule type" value="Genomic_DNA"/>
</dbReference>
<dbReference type="SMR" id="Q39X60"/>
<dbReference type="STRING" id="269799.Gmet_0922"/>
<dbReference type="KEGG" id="gme:Gmet_0922"/>
<dbReference type="eggNOG" id="COG0615">
    <property type="taxonomic scope" value="Bacteria"/>
</dbReference>
<dbReference type="eggNOG" id="COG2870">
    <property type="taxonomic scope" value="Bacteria"/>
</dbReference>
<dbReference type="HOGENOM" id="CLU_021150_2_1_7"/>
<dbReference type="UniPathway" id="UPA00356">
    <property type="reaction ID" value="UER00437"/>
</dbReference>
<dbReference type="UniPathway" id="UPA00356">
    <property type="reaction ID" value="UER00439"/>
</dbReference>
<dbReference type="Proteomes" id="UP000007073">
    <property type="component" value="Chromosome"/>
</dbReference>
<dbReference type="GO" id="GO:0005829">
    <property type="term" value="C:cytosol"/>
    <property type="evidence" value="ECO:0007669"/>
    <property type="project" value="TreeGrafter"/>
</dbReference>
<dbReference type="GO" id="GO:0005524">
    <property type="term" value="F:ATP binding"/>
    <property type="evidence" value="ECO:0007669"/>
    <property type="project" value="UniProtKB-UniRule"/>
</dbReference>
<dbReference type="GO" id="GO:0033785">
    <property type="term" value="F:heptose 7-phosphate kinase activity"/>
    <property type="evidence" value="ECO:0007669"/>
    <property type="project" value="UniProtKB-UniRule"/>
</dbReference>
<dbReference type="GO" id="GO:0033786">
    <property type="term" value="F:heptose-1-phosphate adenylyltransferase activity"/>
    <property type="evidence" value="ECO:0007669"/>
    <property type="project" value="UniProtKB-UniRule"/>
</dbReference>
<dbReference type="GO" id="GO:0016773">
    <property type="term" value="F:phosphotransferase activity, alcohol group as acceptor"/>
    <property type="evidence" value="ECO:0007669"/>
    <property type="project" value="InterPro"/>
</dbReference>
<dbReference type="GO" id="GO:0097171">
    <property type="term" value="P:ADP-L-glycero-beta-D-manno-heptose biosynthetic process"/>
    <property type="evidence" value="ECO:0007669"/>
    <property type="project" value="UniProtKB-UniPathway"/>
</dbReference>
<dbReference type="CDD" id="cd01172">
    <property type="entry name" value="RfaE_like"/>
    <property type="match status" value="1"/>
</dbReference>
<dbReference type="FunFam" id="3.40.1190.20:FF:000002">
    <property type="entry name" value="Bifunctional protein HldE"/>
    <property type="match status" value="1"/>
</dbReference>
<dbReference type="Gene3D" id="3.40.1190.20">
    <property type="match status" value="1"/>
</dbReference>
<dbReference type="Gene3D" id="3.40.50.620">
    <property type="entry name" value="HUPs"/>
    <property type="match status" value="1"/>
</dbReference>
<dbReference type="HAMAP" id="MF_01603">
    <property type="entry name" value="HldE"/>
    <property type="match status" value="1"/>
</dbReference>
<dbReference type="InterPro" id="IPR023030">
    <property type="entry name" value="Bifunc_HldE"/>
</dbReference>
<dbReference type="InterPro" id="IPR002173">
    <property type="entry name" value="Carboh/pur_kinase_PfkB_CS"/>
</dbReference>
<dbReference type="InterPro" id="IPR004821">
    <property type="entry name" value="Cyt_trans-like"/>
</dbReference>
<dbReference type="InterPro" id="IPR011611">
    <property type="entry name" value="PfkB_dom"/>
</dbReference>
<dbReference type="InterPro" id="IPR011913">
    <property type="entry name" value="RfaE_dom_I"/>
</dbReference>
<dbReference type="InterPro" id="IPR011914">
    <property type="entry name" value="RfaE_dom_II"/>
</dbReference>
<dbReference type="InterPro" id="IPR029056">
    <property type="entry name" value="Ribokinase-like"/>
</dbReference>
<dbReference type="InterPro" id="IPR014729">
    <property type="entry name" value="Rossmann-like_a/b/a_fold"/>
</dbReference>
<dbReference type="NCBIfam" id="TIGR00125">
    <property type="entry name" value="cyt_tran_rel"/>
    <property type="match status" value="1"/>
</dbReference>
<dbReference type="NCBIfam" id="TIGR02198">
    <property type="entry name" value="rfaE_dom_I"/>
    <property type="match status" value="1"/>
</dbReference>
<dbReference type="NCBIfam" id="TIGR02199">
    <property type="entry name" value="rfaE_dom_II"/>
    <property type="match status" value="1"/>
</dbReference>
<dbReference type="PANTHER" id="PTHR46969">
    <property type="entry name" value="BIFUNCTIONAL PROTEIN HLDE"/>
    <property type="match status" value="1"/>
</dbReference>
<dbReference type="PANTHER" id="PTHR46969:SF1">
    <property type="entry name" value="BIFUNCTIONAL PROTEIN HLDE"/>
    <property type="match status" value="1"/>
</dbReference>
<dbReference type="Pfam" id="PF01467">
    <property type="entry name" value="CTP_transf_like"/>
    <property type="match status" value="1"/>
</dbReference>
<dbReference type="Pfam" id="PF00294">
    <property type="entry name" value="PfkB"/>
    <property type="match status" value="1"/>
</dbReference>
<dbReference type="SUPFAM" id="SSF52374">
    <property type="entry name" value="Nucleotidylyl transferase"/>
    <property type="match status" value="1"/>
</dbReference>
<dbReference type="SUPFAM" id="SSF53613">
    <property type="entry name" value="Ribokinase-like"/>
    <property type="match status" value="1"/>
</dbReference>
<dbReference type="PROSITE" id="PS00583">
    <property type="entry name" value="PFKB_KINASES_1"/>
    <property type="match status" value="1"/>
</dbReference>
<protein>
    <recommendedName>
        <fullName evidence="1">Bifunctional protein HldE</fullName>
    </recommendedName>
    <domain>
        <recommendedName>
            <fullName evidence="1">D-beta-D-heptose 7-phosphate kinase</fullName>
            <ecNumber evidence="1">2.7.1.167</ecNumber>
        </recommendedName>
        <alternativeName>
            <fullName evidence="1">D-beta-D-heptose 7-phosphotransferase</fullName>
        </alternativeName>
        <alternativeName>
            <fullName evidence="1">D-glycero-beta-D-manno-heptose-7-phosphate kinase</fullName>
        </alternativeName>
    </domain>
    <domain>
        <recommendedName>
            <fullName evidence="1">D-beta-D-heptose 1-phosphate adenylyltransferase</fullName>
            <ecNumber evidence="1">2.7.7.70</ecNumber>
        </recommendedName>
        <alternativeName>
            <fullName evidence="1">D-glycero-beta-D-manno-heptose 1-phosphate adenylyltransferase</fullName>
        </alternativeName>
    </domain>
</protein>
<name>HLDE_GEOMG</name>
<comment type="function">
    <text evidence="1">Catalyzes the phosphorylation of D-glycero-D-manno-heptose 7-phosphate at the C-1 position to selectively form D-glycero-beta-D-manno-heptose-1,7-bisphosphate.</text>
</comment>
<comment type="function">
    <text evidence="1">Catalyzes the ADP transfer from ATP to D-glycero-beta-D-manno-heptose 1-phosphate, yielding ADP-D-glycero-beta-D-manno-heptose.</text>
</comment>
<comment type="catalytic activity">
    <reaction evidence="1">
        <text>D-glycero-beta-D-manno-heptose 7-phosphate + ATP = D-glycero-beta-D-manno-heptose 1,7-bisphosphate + ADP + H(+)</text>
        <dbReference type="Rhea" id="RHEA:27473"/>
        <dbReference type="ChEBI" id="CHEBI:15378"/>
        <dbReference type="ChEBI" id="CHEBI:30616"/>
        <dbReference type="ChEBI" id="CHEBI:60204"/>
        <dbReference type="ChEBI" id="CHEBI:60208"/>
        <dbReference type="ChEBI" id="CHEBI:456216"/>
        <dbReference type="EC" id="2.7.1.167"/>
    </reaction>
</comment>
<comment type="catalytic activity">
    <reaction evidence="1">
        <text>D-glycero-beta-D-manno-heptose 1-phosphate + ATP + H(+) = ADP-D-glycero-beta-D-manno-heptose + diphosphate</text>
        <dbReference type="Rhea" id="RHEA:27465"/>
        <dbReference type="ChEBI" id="CHEBI:15378"/>
        <dbReference type="ChEBI" id="CHEBI:30616"/>
        <dbReference type="ChEBI" id="CHEBI:33019"/>
        <dbReference type="ChEBI" id="CHEBI:59967"/>
        <dbReference type="ChEBI" id="CHEBI:61593"/>
        <dbReference type="EC" id="2.7.7.70"/>
    </reaction>
</comment>
<comment type="pathway">
    <text evidence="1">Nucleotide-sugar biosynthesis; ADP-L-glycero-beta-D-manno-heptose biosynthesis; ADP-L-glycero-beta-D-manno-heptose from D-glycero-beta-D-manno-heptose 7-phosphate: step 1/4.</text>
</comment>
<comment type="pathway">
    <text evidence="1">Nucleotide-sugar biosynthesis; ADP-L-glycero-beta-D-manno-heptose biosynthesis; ADP-L-glycero-beta-D-manno-heptose from D-glycero-beta-D-manno-heptose 7-phosphate: step 3/4.</text>
</comment>
<comment type="subunit">
    <text evidence="1">Homodimer.</text>
</comment>
<comment type="similarity">
    <text evidence="1">In the N-terminal section; belongs to the carbohydrate kinase PfkB family.</text>
</comment>
<comment type="similarity">
    <text evidence="1">In the C-terminal section; belongs to the cytidylyltransferase family.</text>
</comment>
<sequence>MERKNVESLFAHARDINALVIGDLMLDEYLWGRAERISPEAPVQVLDVTREEVRIGGAGNVANNLVALGCRVSVASVVGGDENGTILLHAFSGKGVDVSGVFEDPQRTTSRKTRVVAANQQIVRIDRESRDPIGAGYEEKIVGFLREQGSRFNVILISDYLKGVLTPTLLAAVIAVARERKIPVVVDPKGNDYTKYRGATLLTPNRKEAEAASGIAIRDEASLCRAGERLLATADLTALVITRSEEGMSLFLRDGGVVHIPTFAREVFDVTGAGDTVLAILGLALACGVGFADAAGLANVAAGIAVGKVGTSTVSPAEVIGSMGFQHSDSDAKIKNLDGLAGIIEAEKARGKKIVFTNGCFDLLHVGHVKYLQKAKSYGDVLVLGLNSDASVRRLKGEKRPLIDEAERAHILAALDCIDYVVIFDEDTPLRLIETLKPAVLVKGGDYTPEGVVGKDVVESYGGRVELVTFVDGRSTTNIIDKILRAYGEE</sequence>
<accession>Q39X60</accession>
<feature type="chain" id="PRO_0000255759" description="Bifunctional protein HldE">
    <location>
        <begin position="1"/>
        <end position="490"/>
    </location>
</feature>
<feature type="region of interest" description="Ribokinase">
    <location>
        <begin position="1"/>
        <end position="330"/>
    </location>
</feature>
<feature type="region of interest" description="Cytidylyltransferase">
    <location>
        <begin position="356"/>
        <end position="490"/>
    </location>
</feature>
<feature type="active site" evidence="1">
    <location>
        <position position="275"/>
    </location>
</feature>
<feature type="binding site" evidence="1">
    <location>
        <begin position="205"/>
        <end position="208"/>
    </location>
    <ligand>
        <name>ATP</name>
        <dbReference type="ChEBI" id="CHEBI:30616"/>
    </ligand>
</feature>
<evidence type="ECO:0000255" key="1">
    <source>
        <dbReference type="HAMAP-Rule" id="MF_01603"/>
    </source>
</evidence>
<organism>
    <name type="scientific">Geobacter metallireducens (strain ATCC 53774 / DSM 7210 / GS-15)</name>
    <dbReference type="NCBI Taxonomy" id="269799"/>
    <lineage>
        <taxon>Bacteria</taxon>
        <taxon>Pseudomonadati</taxon>
        <taxon>Thermodesulfobacteriota</taxon>
        <taxon>Desulfuromonadia</taxon>
        <taxon>Geobacterales</taxon>
        <taxon>Geobacteraceae</taxon>
        <taxon>Geobacter</taxon>
    </lineage>
</organism>
<proteinExistence type="inferred from homology"/>
<reference key="1">
    <citation type="journal article" date="2009" name="BMC Microbiol.">
        <title>The genome sequence of Geobacter metallireducens: features of metabolism, physiology and regulation common and dissimilar to Geobacter sulfurreducens.</title>
        <authorList>
            <person name="Aklujkar M."/>
            <person name="Krushkal J."/>
            <person name="DiBartolo G."/>
            <person name="Lapidus A."/>
            <person name="Land M.L."/>
            <person name="Lovley D.R."/>
        </authorList>
    </citation>
    <scope>NUCLEOTIDE SEQUENCE [LARGE SCALE GENOMIC DNA]</scope>
    <source>
        <strain>ATCC 53774 / DSM 7210 / GS-15</strain>
    </source>
</reference>
<gene>
    <name evidence="1" type="primary">hldE</name>
    <name type="ordered locus">Gmet_0922</name>
</gene>